<proteinExistence type="inferred from homology"/>
<sequence>MKDFNLFLLYGNSILPECILILSLIVTIIIDLISDEKNTPWLYLVSLTALVTSVVILLFQWKEEPVSTFFETFQINSFNNIFRLFILICSLLCIPLSIDYIQCTKTALTEFLLFILTATLGGMFLCCANDLVTIFVALECLGLSSYLLSGYTKKDVRSNEATMKYLLMGGASSSILVYGFSLLYGLSGGEIQLQRIVNGLLTTQMYNSTGMFISMIFLLVGVGFKLSLVPFHQWTPDVYEGSPTPVVAFFSVTSKVAALALATRLFNILFPSSSTEWHLLLEILAISSMILGNFIAVTQISMKRMLAYSSISQIGYIIIGVIAAESNNGYASMITYMLIYIFMNLGTFACITLFGLRTGTDNIRDYAGLSTKDPLLTLSLVLCLLSLGGIPPLSGFFGKLYLFWCGWKAGLYFLVPIALSTSVISMYYYLKIIKLLFTKQNRQLTIYIQNYKVSSYALIPKSSIEITMIICVVASTLPGILINPIIAIAQNTFF</sequence>
<name>NU2C2_ANGEV</name>
<keyword id="KW-0150">Chloroplast</keyword>
<keyword id="KW-0472">Membrane</keyword>
<keyword id="KW-0520">NAD</keyword>
<keyword id="KW-0521">NADP</keyword>
<keyword id="KW-0934">Plastid</keyword>
<keyword id="KW-0618">Plastoquinone</keyword>
<keyword id="KW-0874">Quinone</keyword>
<keyword id="KW-0793">Thylakoid</keyword>
<keyword id="KW-1278">Translocase</keyword>
<keyword id="KW-0812">Transmembrane</keyword>
<keyword id="KW-1133">Transmembrane helix</keyword>
<keyword id="KW-0813">Transport</keyword>
<accession>P0CC28</accession>
<accession>A2T377</accession>
<comment type="function">
    <text evidence="1">NDH shuttles electrons from NAD(P)H:plastoquinone, via FMN and iron-sulfur (Fe-S) centers, to quinones in the photosynthetic chain and possibly in a chloroplast respiratory chain. The immediate electron acceptor for the enzyme in this species is believed to be plastoquinone. Couples the redox reaction to proton translocation, and thus conserves the redox energy in a proton gradient.</text>
</comment>
<comment type="catalytic activity">
    <reaction evidence="1">
        <text>a plastoquinone + NADH + (n+1) H(+)(in) = a plastoquinol + NAD(+) + n H(+)(out)</text>
        <dbReference type="Rhea" id="RHEA:42608"/>
        <dbReference type="Rhea" id="RHEA-COMP:9561"/>
        <dbReference type="Rhea" id="RHEA-COMP:9562"/>
        <dbReference type="ChEBI" id="CHEBI:15378"/>
        <dbReference type="ChEBI" id="CHEBI:17757"/>
        <dbReference type="ChEBI" id="CHEBI:57540"/>
        <dbReference type="ChEBI" id="CHEBI:57945"/>
        <dbReference type="ChEBI" id="CHEBI:62192"/>
    </reaction>
</comment>
<comment type="catalytic activity">
    <reaction evidence="1">
        <text>a plastoquinone + NADPH + (n+1) H(+)(in) = a plastoquinol + NADP(+) + n H(+)(out)</text>
        <dbReference type="Rhea" id="RHEA:42612"/>
        <dbReference type="Rhea" id="RHEA-COMP:9561"/>
        <dbReference type="Rhea" id="RHEA-COMP:9562"/>
        <dbReference type="ChEBI" id="CHEBI:15378"/>
        <dbReference type="ChEBI" id="CHEBI:17757"/>
        <dbReference type="ChEBI" id="CHEBI:57783"/>
        <dbReference type="ChEBI" id="CHEBI:58349"/>
        <dbReference type="ChEBI" id="CHEBI:62192"/>
    </reaction>
</comment>
<comment type="subunit">
    <text evidence="1">NDH is composed of at least 16 different subunits, 5 of which are encoded in the nucleus.</text>
</comment>
<comment type="subcellular location">
    <subcellularLocation>
        <location evidence="1">Plastid</location>
        <location evidence="1">Chloroplast thylakoid membrane</location>
        <topology evidence="1">Multi-pass membrane protein</topology>
    </subcellularLocation>
</comment>
<comment type="similarity">
    <text evidence="1">Belongs to the complex I subunit 2 family.</text>
</comment>
<organism>
    <name type="scientific">Angiopteris evecta</name>
    <name type="common">Mule's foot fern</name>
    <name type="synonym">Polypodium evectum</name>
    <dbReference type="NCBI Taxonomy" id="13825"/>
    <lineage>
        <taxon>Eukaryota</taxon>
        <taxon>Viridiplantae</taxon>
        <taxon>Streptophyta</taxon>
        <taxon>Embryophyta</taxon>
        <taxon>Tracheophyta</taxon>
        <taxon>Polypodiopsida</taxon>
        <taxon>Marattiidae</taxon>
        <taxon>Marattiales</taxon>
        <taxon>Marattiaceae</taxon>
        <taxon>Angiopteris</taxon>
    </lineage>
</organism>
<reference key="1">
    <citation type="journal article" date="2007" name="Am. Fern J.">
        <title>The complete plastid genome sequence of Angiopteris evecta (G. Forst.) Hoffm. (Marattiaceae).</title>
        <authorList>
            <person name="Roper J.M."/>
            <person name="Hansen S.K."/>
            <person name="Wolf P.G."/>
            <person name="Karol K.G."/>
            <person name="Mandoli D.F."/>
            <person name="Everett K.D.E."/>
            <person name="Kuehl J.V."/>
            <person name="Boore J.L."/>
        </authorList>
    </citation>
    <scope>NUCLEOTIDE SEQUENCE [LARGE SCALE GENOMIC DNA]</scope>
</reference>
<gene>
    <name evidence="1" type="primary">ndhB2</name>
</gene>
<geneLocation type="chloroplast"/>
<protein>
    <recommendedName>
        <fullName evidence="1">NAD(P)H-quinone oxidoreductase subunit 2 B, chloroplastic</fullName>
        <ecNumber evidence="1">7.1.1.-</ecNumber>
    </recommendedName>
    <alternativeName>
        <fullName evidence="1">NAD(P)H dehydrogenase, subunit 2 B</fullName>
    </alternativeName>
    <alternativeName>
        <fullName evidence="1">NADH-plastoquinone oxidoreductase subunit 2 B</fullName>
    </alternativeName>
</protein>
<feature type="chain" id="PRO_0000391252" description="NAD(P)H-quinone oxidoreductase subunit 2 B, chloroplastic">
    <location>
        <begin position="1"/>
        <end position="494"/>
    </location>
</feature>
<feature type="transmembrane region" description="Helical" evidence="1">
    <location>
        <begin position="13"/>
        <end position="33"/>
    </location>
</feature>
<feature type="transmembrane region" description="Helical" evidence="1">
    <location>
        <begin position="39"/>
        <end position="59"/>
    </location>
</feature>
<feature type="transmembrane region" description="Helical" evidence="1">
    <location>
        <begin position="81"/>
        <end position="101"/>
    </location>
</feature>
<feature type="transmembrane region" description="Helical" evidence="1">
    <location>
        <begin position="107"/>
        <end position="127"/>
    </location>
</feature>
<feature type="transmembrane region" description="Helical" evidence="1">
    <location>
        <begin position="131"/>
        <end position="151"/>
    </location>
</feature>
<feature type="transmembrane region" description="Helical" evidence="1">
    <location>
        <begin position="166"/>
        <end position="186"/>
    </location>
</feature>
<feature type="transmembrane region" description="Helical" evidence="1">
    <location>
        <begin position="211"/>
        <end position="231"/>
    </location>
</feature>
<feature type="transmembrane region" description="Helical" evidence="1">
    <location>
        <begin position="243"/>
        <end position="263"/>
    </location>
</feature>
<feature type="transmembrane region" description="Helical" evidence="1">
    <location>
        <begin position="277"/>
        <end position="297"/>
    </location>
</feature>
<feature type="transmembrane region" description="Helical" evidence="1">
    <location>
        <begin position="305"/>
        <end position="325"/>
    </location>
</feature>
<feature type="transmembrane region" description="Helical" evidence="1">
    <location>
        <begin position="336"/>
        <end position="356"/>
    </location>
</feature>
<feature type="transmembrane region" description="Helical" evidence="1">
    <location>
        <begin position="378"/>
        <end position="398"/>
    </location>
</feature>
<feature type="transmembrane region" description="Helical" evidence="1">
    <location>
        <begin position="411"/>
        <end position="433"/>
    </location>
</feature>
<feature type="transmembrane region" description="Helical" evidence="1">
    <location>
        <begin position="468"/>
        <end position="488"/>
    </location>
</feature>
<evidence type="ECO:0000255" key="1">
    <source>
        <dbReference type="HAMAP-Rule" id="MF_00445"/>
    </source>
</evidence>
<dbReference type="EC" id="7.1.1.-" evidence="1"/>
<dbReference type="EMBL" id="DQ821119">
    <property type="protein sequence ID" value="ABG79662.1"/>
    <property type="molecule type" value="Genomic_DNA"/>
</dbReference>
<dbReference type="SMR" id="P0CC28"/>
<dbReference type="GO" id="GO:0009535">
    <property type="term" value="C:chloroplast thylakoid membrane"/>
    <property type="evidence" value="ECO:0007669"/>
    <property type="project" value="UniProtKB-SubCell"/>
</dbReference>
<dbReference type="GO" id="GO:0008137">
    <property type="term" value="F:NADH dehydrogenase (ubiquinone) activity"/>
    <property type="evidence" value="ECO:0007669"/>
    <property type="project" value="InterPro"/>
</dbReference>
<dbReference type="GO" id="GO:0048038">
    <property type="term" value="F:quinone binding"/>
    <property type="evidence" value="ECO:0007669"/>
    <property type="project" value="UniProtKB-KW"/>
</dbReference>
<dbReference type="GO" id="GO:0042773">
    <property type="term" value="P:ATP synthesis coupled electron transport"/>
    <property type="evidence" value="ECO:0007669"/>
    <property type="project" value="InterPro"/>
</dbReference>
<dbReference type="GO" id="GO:0019684">
    <property type="term" value="P:photosynthesis, light reaction"/>
    <property type="evidence" value="ECO:0007669"/>
    <property type="project" value="UniProtKB-UniRule"/>
</dbReference>
<dbReference type="HAMAP" id="MF_00445">
    <property type="entry name" value="NDH1_NuoN_1"/>
    <property type="match status" value="1"/>
</dbReference>
<dbReference type="InterPro" id="IPR010096">
    <property type="entry name" value="NADH-Q_OxRdtase_suN/2"/>
</dbReference>
<dbReference type="InterPro" id="IPR001750">
    <property type="entry name" value="ND/Mrp_TM"/>
</dbReference>
<dbReference type="InterPro" id="IPR045693">
    <property type="entry name" value="Ndh2_N"/>
</dbReference>
<dbReference type="NCBIfam" id="TIGR01770">
    <property type="entry name" value="NDH_I_N"/>
    <property type="match status" value="1"/>
</dbReference>
<dbReference type="NCBIfam" id="NF002701">
    <property type="entry name" value="PRK02504.1"/>
    <property type="match status" value="1"/>
</dbReference>
<dbReference type="PANTHER" id="PTHR22773">
    <property type="entry name" value="NADH DEHYDROGENASE"/>
    <property type="match status" value="1"/>
</dbReference>
<dbReference type="Pfam" id="PF19530">
    <property type="entry name" value="Ndh2_N"/>
    <property type="match status" value="1"/>
</dbReference>
<dbReference type="Pfam" id="PF00361">
    <property type="entry name" value="Proton_antipo_M"/>
    <property type="match status" value="1"/>
</dbReference>
<dbReference type="PRINTS" id="PR01434">
    <property type="entry name" value="NADHDHGNASE5"/>
</dbReference>